<comment type="catalytic activity">
    <reaction>
        <text>L-seryl-[protein] + ATP = O-phospho-L-seryl-[protein] + ADP + H(+)</text>
        <dbReference type="Rhea" id="RHEA:17989"/>
        <dbReference type="Rhea" id="RHEA-COMP:9863"/>
        <dbReference type="Rhea" id="RHEA-COMP:11604"/>
        <dbReference type="ChEBI" id="CHEBI:15378"/>
        <dbReference type="ChEBI" id="CHEBI:29999"/>
        <dbReference type="ChEBI" id="CHEBI:30616"/>
        <dbReference type="ChEBI" id="CHEBI:83421"/>
        <dbReference type="ChEBI" id="CHEBI:456216"/>
        <dbReference type="EC" id="2.7.11.1"/>
    </reaction>
</comment>
<comment type="catalytic activity">
    <reaction>
        <text>L-threonyl-[protein] + ATP = O-phospho-L-threonyl-[protein] + ADP + H(+)</text>
        <dbReference type="Rhea" id="RHEA:46608"/>
        <dbReference type="Rhea" id="RHEA-COMP:11060"/>
        <dbReference type="Rhea" id="RHEA-COMP:11605"/>
        <dbReference type="ChEBI" id="CHEBI:15378"/>
        <dbReference type="ChEBI" id="CHEBI:30013"/>
        <dbReference type="ChEBI" id="CHEBI:30616"/>
        <dbReference type="ChEBI" id="CHEBI:61977"/>
        <dbReference type="ChEBI" id="CHEBI:456216"/>
        <dbReference type="EC" id="2.7.11.1"/>
    </reaction>
</comment>
<comment type="cofactor">
    <cofactor evidence="1">
        <name>Mg(2+)</name>
        <dbReference type="ChEBI" id="CHEBI:18420"/>
    </cofactor>
</comment>
<comment type="subunit">
    <text evidence="1">Interacts with PTEN.</text>
</comment>
<comment type="subcellular location">
    <subcellularLocation>
        <location evidence="8">Cytoplasm</location>
    </subcellularLocation>
</comment>
<comment type="developmental stage">
    <text evidence="8">In brain cortex, expressed in postmitotic excitatory neurons at 14.5-16.5 dpc.</text>
</comment>
<comment type="similarity">
    <text evidence="9">Belongs to the protein kinase superfamily. AGC Ser/Thr protein kinase family.</text>
</comment>
<feature type="chain" id="PRO_0000277823" description="Microtubule-associated serine/threonine-protein kinase 3">
    <location>
        <begin position="1"/>
        <end position="1321"/>
    </location>
</feature>
<feature type="domain" description="Protein kinase" evidence="4">
    <location>
        <begin position="389"/>
        <end position="662"/>
    </location>
</feature>
<feature type="domain" description="AGC-kinase C-terminal" evidence="5">
    <location>
        <begin position="663"/>
        <end position="734"/>
    </location>
</feature>
<feature type="domain" description="PDZ" evidence="3">
    <location>
        <begin position="966"/>
        <end position="1054"/>
    </location>
</feature>
<feature type="region of interest" description="Disordered" evidence="7">
    <location>
        <begin position="57"/>
        <end position="84"/>
    </location>
</feature>
<feature type="region of interest" description="Disordered" evidence="7">
    <location>
        <begin position="110"/>
        <end position="135"/>
    </location>
</feature>
<feature type="region of interest" description="Disordered" evidence="7">
    <location>
        <begin position="158"/>
        <end position="185"/>
    </location>
</feature>
<feature type="region of interest" description="Disordered" evidence="7">
    <location>
        <begin position="357"/>
        <end position="384"/>
    </location>
</feature>
<feature type="region of interest" description="Disordered" evidence="7">
    <location>
        <begin position="778"/>
        <end position="800"/>
    </location>
</feature>
<feature type="region of interest" description="Disordered" evidence="7">
    <location>
        <begin position="813"/>
        <end position="912"/>
    </location>
</feature>
<feature type="region of interest" description="Disordered" evidence="7">
    <location>
        <begin position="924"/>
        <end position="965"/>
    </location>
</feature>
<feature type="region of interest" description="Disordered" evidence="7">
    <location>
        <begin position="1062"/>
        <end position="1321"/>
    </location>
</feature>
<feature type="compositionally biased region" description="Low complexity" evidence="7">
    <location>
        <begin position="59"/>
        <end position="75"/>
    </location>
</feature>
<feature type="compositionally biased region" description="Polar residues" evidence="7">
    <location>
        <begin position="110"/>
        <end position="121"/>
    </location>
</feature>
<feature type="compositionally biased region" description="Low complexity" evidence="7">
    <location>
        <begin position="176"/>
        <end position="185"/>
    </location>
</feature>
<feature type="compositionally biased region" description="Pro residues" evidence="7">
    <location>
        <begin position="836"/>
        <end position="847"/>
    </location>
</feature>
<feature type="compositionally biased region" description="Low complexity" evidence="7">
    <location>
        <begin position="931"/>
        <end position="958"/>
    </location>
</feature>
<feature type="compositionally biased region" description="Basic residues" evidence="7">
    <location>
        <begin position="1066"/>
        <end position="1081"/>
    </location>
</feature>
<feature type="compositionally biased region" description="Low complexity" evidence="7">
    <location>
        <begin position="1105"/>
        <end position="1166"/>
    </location>
</feature>
<feature type="compositionally biased region" description="Basic residues" evidence="7">
    <location>
        <begin position="1184"/>
        <end position="1194"/>
    </location>
</feature>
<feature type="compositionally biased region" description="Pro residues" evidence="7">
    <location>
        <begin position="1199"/>
        <end position="1223"/>
    </location>
</feature>
<feature type="compositionally biased region" description="Basic and acidic residues" evidence="7">
    <location>
        <begin position="1247"/>
        <end position="1261"/>
    </location>
</feature>
<feature type="compositionally biased region" description="Basic and acidic residues" evidence="7">
    <location>
        <begin position="1271"/>
        <end position="1284"/>
    </location>
</feature>
<feature type="active site" description="Proton acceptor" evidence="4 6">
    <location>
        <position position="512"/>
    </location>
</feature>
<feature type="binding site" evidence="4">
    <location>
        <begin position="395"/>
        <end position="403"/>
    </location>
    <ligand>
        <name>ATP</name>
        <dbReference type="ChEBI" id="CHEBI:30616"/>
    </ligand>
</feature>
<feature type="binding site" evidence="4">
    <location>
        <position position="418"/>
    </location>
    <ligand>
        <name>ATP</name>
        <dbReference type="ChEBI" id="CHEBI:30616"/>
    </ligand>
</feature>
<feature type="modified residue" description="Phosphoserine" evidence="2">
    <location>
        <position position="88"/>
    </location>
</feature>
<feature type="modified residue" description="Phosphoserine" evidence="11">
    <location>
        <position position="107"/>
    </location>
</feature>
<feature type="modified residue" description="Phosphoserine" evidence="11">
    <location>
        <position position="159"/>
    </location>
</feature>
<feature type="modified residue" description="Phosphoserine" evidence="2">
    <location>
        <position position="168"/>
    </location>
</feature>
<feature type="modified residue" description="Phosphoserine" evidence="11">
    <location>
        <position position="702"/>
    </location>
</feature>
<feature type="modified residue" description="Phosphoserine" evidence="11">
    <location>
        <position position="732"/>
    </location>
</feature>
<feature type="modified residue" description="Phosphoserine" evidence="11">
    <location>
        <position position="750"/>
    </location>
</feature>
<feature type="modified residue" description="Phosphoserine" evidence="2">
    <location>
        <position position="776"/>
    </location>
</feature>
<feature type="modified residue" description="Phosphoserine" evidence="2">
    <location>
        <position position="795"/>
    </location>
</feature>
<feature type="modified residue" description="Phosphoserine" evidence="2">
    <location>
        <position position="803"/>
    </location>
</feature>
<feature type="modified residue" description="Phosphoserine" evidence="2">
    <location>
        <position position="813"/>
    </location>
</feature>
<feature type="modified residue" description="Phosphoserine" evidence="2">
    <location>
        <position position="814"/>
    </location>
</feature>
<feature type="modified residue" description="Phosphoserine" evidence="10">
    <location>
        <position position="1237"/>
    </location>
</feature>
<feature type="modified residue" description="Phosphoserine" evidence="10 11">
    <location>
        <position position="1289"/>
    </location>
</feature>
<feature type="sequence conflict" description="In Ref. 2; BAE33328." evidence="9" ref="2">
    <original>G</original>
    <variation>E</variation>
    <location>
        <position position="181"/>
    </location>
</feature>
<feature type="sequence conflict" description="In Ref. 2; BAE33328." evidence="9" ref="2">
    <original>E</original>
    <variation>G</variation>
    <location>
        <position position="263"/>
    </location>
</feature>
<feature type="sequence conflict" description="In Ref. 3; BC024265." evidence="9" ref="3">
    <original>GDRGR</original>
    <variation>DAWVG</variation>
    <location>
        <begin position="762"/>
        <end position="766"/>
    </location>
</feature>
<feature type="sequence conflict" description="In Ref. 3; BC024265." evidence="9" ref="3">
    <original>DTASPPNVS</original>
    <variation>GGRALSLAL</variation>
    <location>
        <begin position="1148"/>
        <end position="1156"/>
    </location>
</feature>
<accession>Q3U214</accession>
<accession>E9QQ28</accession>
<accession>Q6A047</accession>
<reference key="1">
    <citation type="journal article" date="2009" name="PLoS Biol.">
        <title>Lineage-specific biology revealed by a finished genome assembly of the mouse.</title>
        <authorList>
            <person name="Church D.M."/>
            <person name="Goodstadt L."/>
            <person name="Hillier L.W."/>
            <person name="Zody M.C."/>
            <person name="Goldstein S."/>
            <person name="She X."/>
            <person name="Bult C.J."/>
            <person name="Agarwala R."/>
            <person name="Cherry J.L."/>
            <person name="DiCuccio M."/>
            <person name="Hlavina W."/>
            <person name="Kapustin Y."/>
            <person name="Meric P."/>
            <person name="Maglott D."/>
            <person name="Birtle Z."/>
            <person name="Marques A.C."/>
            <person name="Graves T."/>
            <person name="Zhou S."/>
            <person name="Teague B."/>
            <person name="Potamousis K."/>
            <person name="Churas C."/>
            <person name="Place M."/>
            <person name="Herschleb J."/>
            <person name="Runnheim R."/>
            <person name="Forrest D."/>
            <person name="Amos-Landgraf J."/>
            <person name="Schwartz D.C."/>
            <person name="Cheng Z."/>
            <person name="Lindblad-Toh K."/>
            <person name="Eichler E.E."/>
            <person name="Ponting C.P."/>
        </authorList>
    </citation>
    <scope>NUCLEOTIDE SEQUENCE [LARGE SCALE GENOMIC DNA]</scope>
    <source>
        <strain>C57BL/6J</strain>
    </source>
</reference>
<reference key="2">
    <citation type="journal article" date="2005" name="Science">
        <title>The transcriptional landscape of the mammalian genome.</title>
        <authorList>
            <person name="Carninci P."/>
            <person name="Kasukawa T."/>
            <person name="Katayama S."/>
            <person name="Gough J."/>
            <person name="Frith M.C."/>
            <person name="Maeda N."/>
            <person name="Oyama R."/>
            <person name="Ravasi T."/>
            <person name="Lenhard B."/>
            <person name="Wells C."/>
            <person name="Kodzius R."/>
            <person name="Shimokawa K."/>
            <person name="Bajic V.B."/>
            <person name="Brenner S.E."/>
            <person name="Batalov S."/>
            <person name="Forrest A.R."/>
            <person name="Zavolan M."/>
            <person name="Davis M.J."/>
            <person name="Wilming L.G."/>
            <person name="Aidinis V."/>
            <person name="Allen J.E."/>
            <person name="Ambesi-Impiombato A."/>
            <person name="Apweiler R."/>
            <person name="Aturaliya R.N."/>
            <person name="Bailey T.L."/>
            <person name="Bansal M."/>
            <person name="Baxter L."/>
            <person name="Beisel K.W."/>
            <person name="Bersano T."/>
            <person name="Bono H."/>
            <person name="Chalk A.M."/>
            <person name="Chiu K.P."/>
            <person name="Choudhary V."/>
            <person name="Christoffels A."/>
            <person name="Clutterbuck D.R."/>
            <person name="Crowe M.L."/>
            <person name="Dalla E."/>
            <person name="Dalrymple B.P."/>
            <person name="de Bono B."/>
            <person name="Della Gatta G."/>
            <person name="di Bernardo D."/>
            <person name="Down T."/>
            <person name="Engstrom P."/>
            <person name="Fagiolini M."/>
            <person name="Faulkner G."/>
            <person name="Fletcher C.F."/>
            <person name="Fukushima T."/>
            <person name="Furuno M."/>
            <person name="Futaki S."/>
            <person name="Gariboldi M."/>
            <person name="Georgii-Hemming P."/>
            <person name="Gingeras T.R."/>
            <person name="Gojobori T."/>
            <person name="Green R.E."/>
            <person name="Gustincich S."/>
            <person name="Harbers M."/>
            <person name="Hayashi Y."/>
            <person name="Hensch T.K."/>
            <person name="Hirokawa N."/>
            <person name="Hill D."/>
            <person name="Huminiecki L."/>
            <person name="Iacono M."/>
            <person name="Ikeo K."/>
            <person name="Iwama A."/>
            <person name="Ishikawa T."/>
            <person name="Jakt M."/>
            <person name="Kanapin A."/>
            <person name="Katoh M."/>
            <person name="Kawasawa Y."/>
            <person name="Kelso J."/>
            <person name="Kitamura H."/>
            <person name="Kitano H."/>
            <person name="Kollias G."/>
            <person name="Krishnan S.P."/>
            <person name="Kruger A."/>
            <person name="Kummerfeld S.K."/>
            <person name="Kurochkin I.V."/>
            <person name="Lareau L.F."/>
            <person name="Lazarevic D."/>
            <person name="Lipovich L."/>
            <person name="Liu J."/>
            <person name="Liuni S."/>
            <person name="McWilliam S."/>
            <person name="Madan Babu M."/>
            <person name="Madera M."/>
            <person name="Marchionni L."/>
            <person name="Matsuda H."/>
            <person name="Matsuzawa S."/>
            <person name="Miki H."/>
            <person name="Mignone F."/>
            <person name="Miyake S."/>
            <person name="Morris K."/>
            <person name="Mottagui-Tabar S."/>
            <person name="Mulder N."/>
            <person name="Nakano N."/>
            <person name="Nakauchi H."/>
            <person name="Ng P."/>
            <person name="Nilsson R."/>
            <person name="Nishiguchi S."/>
            <person name="Nishikawa S."/>
            <person name="Nori F."/>
            <person name="Ohara O."/>
            <person name="Okazaki Y."/>
            <person name="Orlando V."/>
            <person name="Pang K.C."/>
            <person name="Pavan W.J."/>
            <person name="Pavesi G."/>
            <person name="Pesole G."/>
            <person name="Petrovsky N."/>
            <person name="Piazza S."/>
            <person name="Reed J."/>
            <person name="Reid J.F."/>
            <person name="Ring B.Z."/>
            <person name="Ringwald M."/>
            <person name="Rost B."/>
            <person name="Ruan Y."/>
            <person name="Salzberg S.L."/>
            <person name="Sandelin A."/>
            <person name="Schneider C."/>
            <person name="Schoenbach C."/>
            <person name="Sekiguchi K."/>
            <person name="Semple C.A."/>
            <person name="Seno S."/>
            <person name="Sessa L."/>
            <person name="Sheng Y."/>
            <person name="Shibata Y."/>
            <person name="Shimada H."/>
            <person name="Shimada K."/>
            <person name="Silva D."/>
            <person name="Sinclair B."/>
            <person name="Sperling S."/>
            <person name="Stupka E."/>
            <person name="Sugiura K."/>
            <person name="Sultana R."/>
            <person name="Takenaka Y."/>
            <person name="Taki K."/>
            <person name="Tammoja K."/>
            <person name="Tan S.L."/>
            <person name="Tang S."/>
            <person name="Taylor M.S."/>
            <person name="Tegner J."/>
            <person name="Teichmann S.A."/>
            <person name="Ueda H.R."/>
            <person name="van Nimwegen E."/>
            <person name="Verardo R."/>
            <person name="Wei C.L."/>
            <person name="Yagi K."/>
            <person name="Yamanishi H."/>
            <person name="Zabarovsky E."/>
            <person name="Zhu S."/>
            <person name="Zimmer A."/>
            <person name="Hide W."/>
            <person name="Bult C."/>
            <person name="Grimmond S.M."/>
            <person name="Teasdale R.D."/>
            <person name="Liu E.T."/>
            <person name="Brusic V."/>
            <person name="Quackenbush J."/>
            <person name="Wahlestedt C."/>
            <person name="Mattick J.S."/>
            <person name="Hume D.A."/>
            <person name="Kai C."/>
            <person name="Sasaki D."/>
            <person name="Tomaru Y."/>
            <person name="Fukuda S."/>
            <person name="Kanamori-Katayama M."/>
            <person name="Suzuki M."/>
            <person name="Aoki J."/>
            <person name="Arakawa T."/>
            <person name="Iida J."/>
            <person name="Imamura K."/>
            <person name="Itoh M."/>
            <person name="Kato T."/>
            <person name="Kawaji H."/>
            <person name="Kawagashira N."/>
            <person name="Kawashima T."/>
            <person name="Kojima M."/>
            <person name="Kondo S."/>
            <person name="Konno H."/>
            <person name="Nakano K."/>
            <person name="Ninomiya N."/>
            <person name="Nishio T."/>
            <person name="Okada M."/>
            <person name="Plessy C."/>
            <person name="Shibata K."/>
            <person name="Shiraki T."/>
            <person name="Suzuki S."/>
            <person name="Tagami M."/>
            <person name="Waki K."/>
            <person name="Watahiki A."/>
            <person name="Okamura-Oho Y."/>
            <person name="Suzuki H."/>
            <person name="Kawai J."/>
            <person name="Hayashizaki Y."/>
        </authorList>
    </citation>
    <scope>NUCLEOTIDE SEQUENCE [LARGE SCALE MRNA] OF 1-786</scope>
    <source>
        <strain>NOD</strain>
    </source>
</reference>
<reference key="3">
    <citation type="journal article" date="2004" name="Genome Res.">
        <title>The status, quality, and expansion of the NIH full-length cDNA project: the Mammalian Gene Collection (MGC).</title>
        <authorList>
            <consortium name="The MGC Project Team"/>
        </authorList>
    </citation>
    <scope>NUCLEOTIDE SEQUENCE [LARGE SCALE MRNA] OF 762-1156</scope>
    <source>
        <tissue>Liver</tissue>
    </source>
</reference>
<reference key="4">
    <citation type="journal article" date="2004" name="DNA Res.">
        <title>Prediction of the coding sequences of mouse homologues of KIAA gene: IV. The complete nucleotide sequences of 500 mouse KIAA-homologous cDNAs identified by screening of terminal sequences of cDNA clones randomly sampled from size-fractionated libraries.</title>
        <authorList>
            <person name="Okazaki N."/>
            <person name="Kikuno R."/>
            <person name="Ohara R."/>
            <person name="Inamoto S."/>
            <person name="Koseki H."/>
            <person name="Hiraoka S."/>
            <person name="Saga Y."/>
            <person name="Seino S."/>
            <person name="Nishimura M."/>
            <person name="Kaisho T."/>
            <person name="Hoshino K."/>
            <person name="Kitamura H."/>
            <person name="Nagase T."/>
            <person name="Ohara O."/>
            <person name="Koga H."/>
        </authorList>
    </citation>
    <scope>NUCLEOTIDE SEQUENCE [LARGE SCALE MRNA] OF 907-1321</scope>
    <source>
        <tissue>Thymus</tissue>
    </source>
</reference>
<reference key="5">
    <citation type="journal article" date="2006" name="Mol. Cell. Proteomics">
        <title>Comprehensive identification of phosphorylation sites in postsynaptic density preparations.</title>
        <authorList>
            <person name="Trinidad J.C."/>
            <person name="Specht C.G."/>
            <person name="Thalhammer A."/>
            <person name="Schoepfer R."/>
            <person name="Burlingame A.L."/>
        </authorList>
    </citation>
    <scope>PHOSPHORYLATION [LARGE SCALE ANALYSIS] AT SER-1237 AND SER-1289</scope>
    <scope>IDENTIFICATION BY MASS SPECTROMETRY [LARGE SCALE ANALYSIS]</scope>
    <source>
        <tissue>Brain</tissue>
    </source>
</reference>
<reference key="6">
    <citation type="journal article" date="2007" name="Proc. Natl. Acad. Sci. U.S.A.">
        <title>Large-scale phosphorylation analysis of mouse liver.</title>
        <authorList>
            <person name="Villen J."/>
            <person name="Beausoleil S.A."/>
            <person name="Gerber S.A."/>
            <person name="Gygi S.P."/>
        </authorList>
    </citation>
    <scope>IDENTIFICATION BY MASS SPECTROMETRY [LARGE SCALE ANALYSIS]</scope>
    <source>
        <tissue>Liver</tissue>
    </source>
</reference>
<reference key="7">
    <citation type="journal article" date="2010" name="Cell">
        <title>A tissue-specific atlas of mouse protein phosphorylation and expression.</title>
        <authorList>
            <person name="Huttlin E.L."/>
            <person name="Jedrychowski M.P."/>
            <person name="Elias J.E."/>
            <person name="Goswami T."/>
            <person name="Rad R."/>
            <person name="Beausoleil S.A."/>
            <person name="Villen J."/>
            <person name="Haas W."/>
            <person name="Sowa M.E."/>
            <person name="Gygi S.P."/>
        </authorList>
    </citation>
    <scope>PHOSPHORYLATION [LARGE SCALE ANALYSIS] AT SER-107; SER-159; SER-702; SER-732; SER-750 AND SER-1289</scope>
    <scope>IDENTIFICATION BY MASS SPECTROMETRY [LARGE SCALE ANALYSIS]</scope>
    <source>
        <tissue>Brain</tissue>
        <tissue>Brown adipose tissue</tissue>
        <tissue>Kidney</tissue>
        <tissue>Lung</tissue>
        <tissue>Pancreas</tissue>
        <tissue>Spleen</tissue>
    </source>
</reference>
<reference key="8">
    <citation type="journal article" date="2021" name="Ann. Neurol.">
        <title>Pathogenic MAST3 Variants in the STK Domain Are Associated with Epilepsy.</title>
        <authorList>
            <consortium name="Undiagnosed Diseases Network (UDN)"/>
            <person name="Spinelli E."/>
            <person name="Christensen K.R."/>
            <person name="Bryant E."/>
            <person name="Schneider A."/>
            <person name="Rakotomamonjy J."/>
            <person name="Muir A.M."/>
            <person name="Giannelli J."/>
            <person name="Littlejohn R.O."/>
            <person name="Roeder E.R."/>
            <person name="Schmidt B."/>
            <person name="Wilson W.G."/>
            <person name="Marco E.J."/>
            <person name="Iwama K."/>
            <person name="Kumada S."/>
            <person name="Pisano T."/>
            <person name="Barba C."/>
            <person name="Vetro A."/>
            <person name="Brilstra E.H."/>
            <person name="van Jaarsveld R.H."/>
            <person name="Matsumoto N."/>
            <person name="Goldberg-Stern H."/>
            <person name="Carney P.W."/>
            <person name="Andrews P.I."/>
            <person name="El Achkar C.M."/>
            <person name="Berkovic S."/>
            <person name="Rodan L.H."/>
            <person name="McWalter K."/>
            <person name="Guerrini R."/>
            <person name="Scheffer I.E."/>
            <person name="Mefford H.C."/>
            <person name="Mandelstam S."/>
            <person name="Laux L."/>
            <person name="Millichap J.J."/>
            <person name="Guemez-Gamboa A."/>
            <person name="Nairn A.C."/>
            <person name="Carvill G.L."/>
        </authorList>
    </citation>
    <scope>DEVELOPMENTAL STAGE</scope>
    <scope>SUBCELLULAR LOCATION</scope>
</reference>
<sequence length="1321" mass="144174">MKSRREKLLIPALTLDLSPSSQSPCLLSPGSPCSPCSPSLGLQPWSCRSGNRKSLVVGTPSPTLSRPLSPLSVPTAGNSPLDSPRNFSAAAAISFPFARRADGRRWSLASLPSSGYGTNTPSSTVSSSSSSRERLHQLPFQPTADELRFLSKHFRSSESVVDEDGGRSPRLRPRSRSLSPGRTSGTFDNEIVMMNHVYRERFPKATAQMEGRLQDFLAAFAPGDRLALADGVLGFIHHQIVELARDCLAKSGEALVTSRYFLEMQDKLERLLQDAHERSDSAEVGFIVQLVRKLLIIISRPARLLECLEFDPEEFYHLLEAAEGQAREDQGVKTDLPRYIIRQLGLAKDPLEEIQPLNDLDESQPPAPGSPESRGLGGPSRRKPCESDFETIKLISNGAYGAVYLVRHRDTRQRFAIKKINKQNLILRNQIQQVFVERDILTFAENPFVVGMFCSFETRRHLCMVMEYVEGGDCATLLKNMGPLPVDMARMYFAETVLALEYLHNYGIVHRDLKPDNLLITSLGHIKLTDFGLSKIGLMSMATNLYEGHIEKDAREFVDKQVCGTPEYIAPEVIFRQGYGKPVDWWAMGVILYEFLVGCVPFFGDTPEELFGQVVSDEIMWPEGDEALPLDAQDLITRLLRQSPMDRLGTGGTHEVKQHPFFLALDWAGLLRHKAEFVPQLEAEDDTSYFDTRSERYRHLGSEDDETNDEESSTEIPQFSSCSHRFSKVYSSSEFLAVQPTPTFAERSFSEDREDGWGQSLGDRGRRLSADLRLRSWTPASSCQPSSCQTDRGPSPSLLSTISLDVMPKFAFSSEDEGASSGPADPQKPVFILGEPDPPPPTTPVTPKPCNLSADTAVLSHARLRSNSTGARHSTPRPLDAGRGRRLGGSRDPGPEKPRASPGGSGGRVPKSASVSALSLIITADDGSGGPLMSPLSPRSLSSNPSSRDSSPSRDPSPVCGSLRPPIVIHSSGKKYGFSLRAIRVYMGDSDVYTVHHVVWSVEEGSPAQEAGLRAGDLITHINGESVLGLVHMDVVELLLKSGNKISLRTTALENTSIKVGPARKNVAKGRMARRSKRSRRRETQDRRKSLFKRISKPSSVLHTSRSFSSGLQHSLSSSESLPGSPTHSLSPSPTTPCRSPAPDAPTDTASPPNVSPSSSSPASPATGHTRPSSLHGLAAKLGPPRHKSGRRKSTSSIPPSPLACPPVPTPPPRSPSPLPGHIPIPARSPRLRRGQSADKLGLGTSERLDGDGGRRARGAEAELVVMRRLHLSERRDSFKKQEAVQEVSFDEEPGPPRGVPKIAVQGAEATPGTPGHARKD</sequence>
<proteinExistence type="evidence at protein level"/>
<keyword id="KW-0067">ATP-binding</keyword>
<keyword id="KW-0963">Cytoplasm</keyword>
<keyword id="KW-0418">Kinase</keyword>
<keyword id="KW-0460">Magnesium</keyword>
<keyword id="KW-0547">Nucleotide-binding</keyword>
<keyword id="KW-0597">Phosphoprotein</keyword>
<keyword id="KW-1185">Reference proteome</keyword>
<keyword id="KW-0723">Serine/threonine-protein kinase</keyword>
<keyword id="KW-0808">Transferase</keyword>
<protein>
    <recommendedName>
        <fullName>Microtubule-associated serine/threonine-protein kinase 3</fullName>
        <ecNumber>2.7.11.1</ecNumber>
    </recommendedName>
</protein>
<evidence type="ECO:0000250" key="1"/>
<evidence type="ECO:0000250" key="2">
    <source>
        <dbReference type="UniProtKB" id="O60307"/>
    </source>
</evidence>
<evidence type="ECO:0000255" key="3">
    <source>
        <dbReference type="PROSITE-ProRule" id="PRU00143"/>
    </source>
</evidence>
<evidence type="ECO:0000255" key="4">
    <source>
        <dbReference type="PROSITE-ProRule" id="PRU00159"/>
    </source>
</evidence>
<evidence type="ECO:0000255" key="5">
    <source>
        <dbReference type="PROSITE-ProRule" id="PRU00618"/>
    </source>
</evidence>
<evidence type="ECO:0000255" key="6">
    <source>
        <dbReference type="PROSITE-ProRule" id="PRU10027"/>
    </source>
</evidence>
<evidence type="ECO:0000256" key="7">
    <source>
        <dbReference type="SAM" id="MobiDB-lite"/>
    </source>
</evidence>
<evidence type="ECO:0000269" key="8">
    <source>
    </source>
</evidence>
<evidence type="ECO:0000305" key="9"/>
<evidence type="ECO:0007744" key="10">
    <source>
    </source>
</evidence>
<evidence type="ECO:0007744" key="11">
    <source>
    </source>
</evidence>
<gene>
    <name type="primary">Mast3</name>
    <name type="synonym">Kiaa0561</name>
</gene>
<organism>
    <name type="scientific">Mus musculus</name>
    <name type="common">Mouse</name>
    <dbReference type="NCBI Taxonomy" id="10090"/>
    <lineage>
        <taxon>Eukaryota</taxon>
        <taxon>Metazoa</taxon>
        <taxon>Chordata</taxon>
        <taxon>Craniata</taxon>
        <taxon>Vertebrata</taxon>
        <taxon>Euteleostomi</taxon>
        <taxon>Mammalia</taxon>
        <taxon>Eutheria</taxon>
        <taxon>Euarchontoglires</taxon>
        <taxon>Glires</taxon>
        <taxon>Rodentia</taxon>
        <taxon>Myomorpha</taxon>
        <taxon>Muroidea</taxon>
        <taxon>Muridae</taxon>
        <taxon>Murinae</taxon>
        <taxon>Mus</taxon>
        <taxon>Mus</taxon>
    </lineage>
</organism>
<name>MAST3_MOUSE</name>
<dbReference type="EC" id="2.7.11.1"/>
<dbReference type="EMBL" id="AC162446">
    <property type="status" value="NOT_ANNOTATED_CDS"/>
    <property type="molecule type" value="Genomic_DNA"/>
</dbReference>
<dbReference type="EMBL" id="AK155568">
    <property type="protein sequence ID" value="BAE33328.1"/>
    <property type="molecule type" value="mRNA"/>
</dbReference>
<dbReference type="EMBL" id="BC024265">
    <property type="status" value="NOT_ANNOTATED_CDS"/>
    <property type="molecule type" value="mRNA"/>
</dbReference>
<dbReference type="EMBL" id="AK172971">
    <property type="protein sequence ID" value="BAD32249.1"/>
    <property type="molecule type" value="mRNA"/>
</dbReference>
<dbReference type="RefSeq" id="NP_001389903.1">
    <property type="nucleotide sequence ID" value="NM_001402974.1"/>
</dbReference>
<dbReference type="RefSeq" id="NP_955012.2">
    <property type="nucleotide sequence ID" value="NM_199308.2"/>
</dbReference>
<dbReference type="RefSeq" id="XP_017168400.1">
    <property type="nucleotide sequence ID" value="XM_017312911.1"/>
</dbReference>
<dbReference type="SMR" id="Q3U214"/>
<dbReference type="BioGRID" id="244925">
    <property type="interactions" value="9"/>
</dbReference>
<dbReference type="FunCoup" id="Q3U214">
    <property type="interactions" value="1108"/>
</dbReference>
<dbReference type="IntAct" id="Q3U214">
    <property type="interactions" value="7"/>
</dbReference>
<dbReference type="MINT" id="Q3U214"/>
<dbReference type="STRING" id="10090.ENSMUSP00000148686"/>
<dbReference type="GlyGen" id="Q3U214">
    <property type="glycosylation" value="8 sites, 2 N-linked glycans (2 sites), 1 O-linked glycan (1 site)"/>
</dbReference>
<dbReference type="iPTMnet" id="Q3U214"/>
<dbReference type="PhosphoSitePlus" id="Q3U214"/>
<dbReference type="jPOST" id="Q3U214"/>
<dbReference type="PaxDb" id="10090-ENSMUSP00000128703"/>
<dbReference type="ProteomicsDB" id="295799"/>
<dbReference type="Pumba" id="Q3U214"/>
<dbReference type="Antibodypedia" id="27914">
    <property type="antibodies" value="169 antibodies from 31 providers"/>
</dbReference>
<dbReference type="DNASU" id="546071"/>
<dbReference type="Ensembl" id="ENSMUST00000166004.3">
    <property type="protein sequence ID" value="ENSMUSP00000128703.3"/>
    <property type="gene ID" value="ENSMUSG00000031833.11"/>
</dbReference>
<dbReference type="GeneID" id="546071"/>
<dbReference type="KEGG" id="mmu:546071"/>
<dbReference type="UCSC" id="uc009mbq.1">
    <property type="organism name" value="mouse"/>
</dbReference>
<dbReference type="AGR" id="MGI:2683541"/>
<dbReference type="CTD" id="23031"/>
<dbReference type="MGI" id="MGI:2683541">
    <property type="gene designation" value="Mast3"/>
</dbReference>
<dbReference type="VEuPathDB" id="HostDB:ENSMUSG00000031833"/>
<dbReference type="eggNOG" id="KOG0606">
    <property type="taxonomic scope" value="Eukaryota"/>
</dbReference>
<dbReference type="GeneTree" id="ENSGT00940000157166"/>
<dbReference type="InParanoid" id="Q3U214"/>
<dbReference type="OrthoDB" id="10070999at2759"/>
<dbReference type="BRENDA" id="2.7.11.1">
    <property type="organism ID" value="3474"/>
</dbReference>
<dbReference type="BioGRID-ORCS" id="546071">
    <property type="hits" value="6 hits in 79 CRISPR screens"/>
</dbReference>
<dbReference type="CD-CODE" id="CE726F99">
    <property type="entry name" value="Postsynaptic density"/>
</dbReference>
<dbReference type="ChiTaRS" id="Mast3">
    <property type="organism name" value="mouse"/>
</dbReference>
<dbReference type="PRO" id="PR:Q3U214"/>
<dbReference type="Proteomes" id="UP000000589">
    <property type="component" value="Chromosome 8"/>
</dbReference>
<dbReference type="RNAct" id="Q3U214">
    <property type="molecule type" value="protein"/>
</dbReference>
<dbReference type="Bgee" id="ENSMUSG00000031833">
    <property type="expression patterns" value="Expressed in primary visual cortex and 60 other cell types or tissues"/>
</dbReference>
<dbReference type="ExpressionAtlas" id="Q3U214">
    <property type="expression patterns" value="baseline and differential"/>
</dbReference>
<dbReference type="GO" id="GO:0005737">
    <property type="term" value="C:cytoplasm"/>
    <property type="evidence" value="ECO:0000314"/>
    <property type="project" value="UniProtKB"/>
</dbReference>
<dbReference type="GO" id="GO:0005524">
    <property type="term" value="F:ATP binding"/>
    <property type="evidence" value="ECO:0007669"/>
    <property type="project" value="UniProtKB-KW"/>
</dbReference>
<dbReference type="GO" id="GO:0000287">
    <property type="term" value="F:magnesium ion binding"/>
    <property type="evidence" value="ECO:0007669"/>
    <property type="project" value="InterPro"/>
</dbReference>
<dbReference type="GO" id="GO:0106310">
    <property type="term" value="F:protein serine kinase activity"/>
    <property type="evidence" value="ECO:0007669"/>
    <property type="project" value="RHEA"/>
</dbReference>
<dbReference type="GO" id="GO:0004674">
    <property type="term" value="F:protein serine/threonine kinase activity"/>
    <property type="evidence" value="ECO:0007669"/>
    <property type="project" value="UniProtKB-KW"/>
</dbReference>
<dbReference type="CDD" id="cd23075">
    <property type="entry name" value="PDZ_MAST3"/>
    <property type="match status" value="1"/>
</dbReference>
<dbReference type="CDD" id="cd05609">
    <property type="entry name" value="STKc_MAST"/>
    <property type="match status" value="1"/>
</dbReference>
<dbReference type="FunFam" id="3.30.200.20:FF:000457">
    <property type="entry name" value="Microtubule-associated serine/threonine-protein kinase"/>
    <property type="match status" value="1"/>
</dbReference>
<dbReference type="FunFam" id="1.10.510.10:FF:000012">
    <property type="entry name" value="microtubule-associated serine/threonine-protein kinase 2 isoform X1"/>
    <property type="match status" value="1"/>
</dbReference>
<dbReference type="FunFam" id="1.20.1480.20:FF:000001">
    <property type="entry name" value="microtubule-associated serine/threonine-protein kinase 4 isoform X1"/>
    <property type="match status" value="1"/>
</dbReference>
<dbReference type="FunFam" id="2.30.42.10:FF:000008">
    <property type="entry name" value="microtubule-associated serine/threonine-protein kinase 4 isoform X2"/>
    <property type="match status" value="1"/>
</dbReference>
<dbReference type="Gene3D" id="2.30.42.10">
    <property type="match status" value="1"/>
</dbReference>
<dbReference type="Gene3D" id="1.20.1480.20">
    <property type="entry name" value="MAST3 pre-PK domain-like"/>
    <property type="match status" value="1"/>
</dbReference>
<dbReference type="Gene3D" id="3.30.200.20">
    <property type="entry name" value="Phosphorylase Kinase, domain 1"/>
    <property type="match status" value="1"/>
</dbReference>
<dbReference type="Gene3D" id="1.10.510.10">
    <property type="entry name" value="Transferase(Phosphotransferase) domain 1"/>
    <property type="match status" value="1"/>
</dbReference>
<dbReference type="InterPro" id="IPR000961">
    <property type="entry name" value="AGC-kinase_C"/>
</dbReference>
<dbReference type="InterPro" id="IPR011009">
    <property type="entry name" value="Kinase-like_dom_sf"/>
</dbReference>
<dbReference type="InterPro" id="IPR037711">
    <property type="entry name" value="MAST"/>
</dbReference>
<dbReference type="InterPro" id="IPR015022">
    <property type="entry name" value="MAST_pre-PK_dom"/>
</dbReference>
<dbReference type="InterPro" id="IPR023142">
    <property type="entry name" value="MAST_pre-PK_dom_sf"/>
</dbReference>
<dbReference type="InterPro" id="IPR001478">
    <property type="entry name" value="PDZ"/>
</dbReference>
<dbReference type="InterPro" id="IPR041489">
    <property type="entry name" value="PDZ_6"/>
</dbReference>
<dbReference type="InterPro" id="IPR036034">
    <property type="entry name" value="PDZ_sf"/>
</dbReference>
<dbReference type="InterPro" id="IPR000719">
    <property type="entry name" value="Prot_kinase_dom"/>
</dbReference>
<dbReference type="InterPro" id="IPR008271">
    <property type="entry name" value="Ser/Thr_kinase_AS"/>
</dbReference>
<dbReference type="InterPro" id="IPR050236">
    <property type="entry name" value="Ser_Thr_kinase_AGC"/>
</dbReference>
<dbReference type="PANTHER" id="PTHR24356:SF140">
    <property type="entry name" value="MICROTUBULE-ASSOCIATED SERINE_THREONINE-PROTEIN KINASE 3"/>
    <property type="match status" value="1"/>
</dbReference>
<dbReference type="PANTHER" id="PTHR24356">
    <property type="entry name" value="SERINE/THREONINE-PROTEIN KINASE"/>
    <property type="match status" value="1"/>
</dbReference>
<dbReference type="Pfam" id="PF08926">
    <property type="entry name" value="DUF1908"/>
    <property type="match status" value="1"/>
</dbReference>
<dbReference type="Pfam" id="PF17820">
    <property type="entry name" value="PDZ_6"/>
    <property type="match status" value="1"/>
</dbReference>
<dbReference type="Pfam" id="PF00069">
    <property type="entry name" value="Pkinase"/>
    <property type="match status" value="1"/>
</dbReference>
<dbReference type="SMART" id="SM00228">
    <property type="entry name" value="PDZ"/>
    <property type="match status" value="1"/>
</dbReference>
<dbReference type="SMART" id="SM00220">
    <property type="entry name" value="S_TKc"/>
    <property type="match status" value="1"/>
</dbReference>
<dbReference type="SUPFAM" id="SSF140482">
    <property type="entry name" value="MAST3 pre-PK domain-like"/>
    <property type="match status" value="1"/>
</dbReference>
<dbReference type="SUPFAM" id="SSF50156">
    <property type="entry name" value="PDZ domain-like"/>
    <property type="match status" value="1"/>
</dbReference>
<dbReference type="SUPFAM" id="SSF56112">
    <property type="entry name" value="Protein kinase-like (PK-like)"/>
    <property type="match status" value="1"/>
</dbReference>
<dbReference type="PROSITE" id="PS51285">
    <property type="entry name" value="AGC_KINASE_CTER"/>
    <property type="match status" value="1"/>
</dbReference>
<dbReference type="PROSITE" id="PS50106">
    <property type="entry name" value="PDZ"/>
    <property type="match status" value="1"/>
</dbReference>
<dbReference type="PROSITE" id="PS50011">
    <property type="entry name" value="PROTEIN_KINASE_DOM"/>
    <property type="match status" value="1"/>
</dbReference>
<dbReference type="PROSITE" id="PS00108">
    <property type="entry name" value="PROTEIN_KINASE_ST"/>
    <property type="match status" value="1"/>
</dbReference>